<keyword id="KW-0963">Cytoplasm</keyword>
<keyword id="KW-0349">Heme</keyword>
<keyword id="KW-0408">Iron</keyword>
<keyword id="KW-0479">Metal-binding</keyword>
<keyword id="KW-0503">Monooxygenase</keyword>
<keyword id="KW-0560">Oxidoreductase</keyword>
<organism>
    <name type="scientific">Staphylococcus aureus (strain MW2)</name>
    <dbReference type="NCBI Taxonomy" id="196620"/>
    <lineage>
        <taxon>Bacteria</taxon>
        <taxon>Bacillati</taxon>
        <taxon>Bacillota</taxon>
        <taxon>Bacilli</taxon>
        <taxon>Bacillales</taxon>
        <taxon>Staphylococcaceae</taxon>
        <taxon>Staphylococcus</taxon>
    </lineage>
</organism>
<reference key="1">
    <citation type="journal article" date="2002" name="Lancet">
        <title>Genome and virulence determinants of high virulence community-acquired MRSA.</title>
        <authorList>
            <person name="Baba T."/>
            <person name="Takeuchi F."/>
            <person name="Kuroda M."/>
            <person name="Yuzawa H."/>
            <person name="Aoki K."/>
            <person name="Oguchi A."/>
            <person name="Nagai Y."/>
            <person name="Iwama N."/>
            <person name="Asano K."/>
            <person name="Naimi T."/>
            <person name="Kuroda H."/>
            <person name="Cui L."/>
            <person name="Yamamoto K."/>
            <person name="Hiramatsu K."/>
        </authorList>
    </citation>
    <scope>NUCLEOTIDE SEQUENCE [LARGE SCALE GENOMIC DNA]</scope>
    <source>
        <strain>MW2</strain>
    </source>
</reference>
<dbReference type="EC" id="1.14.99.48" evidence="1"/>
<dbReference type="EMBL" id="BA000033">
    <property type="protein sequence ID" value="BAB94005.1"/>
    <property type="molecule type" value="Genomic_DNA"/>
</dbReference>
<dbReference type="RefSeq" id="WP_000480603.1">
    <property type="nucleotide sequence ID" value="NC_003923.1"/>
</dbReference>
<dbReference type="SMR" id="Q7A1Y8"/>
<dbReference type="KEGG" id="sam:MW0140"/>
<dbReference type="HOGENOM" id="CLU_141544_2_1_9"/>
<dbReference type="GO" id="GO:0005737">
    <property type="term" value="C:cytoplasm"/>
    <property type="evidence" value="ECO:0007669"/>
    <property type="project" value="UniProtKB-SubCell"/>
</dbReference>
<dbReference type="GO" id="GO:0020037">
    <property type="term" value="F:heme binding"/>
    <property type="evidence" value="ECO:0007669"/>
    <property type="project" value="UniProtKB-UniRule"/>
</dbReference>
<dbReference type="GO" id="GO:0004392">
    <property type="term" value="F:heme oxygenase (decyclizing) activity"/>
    <property type="evidence" value="ECO:0007669"/>
    <property type="project" value="UniProtKB-UniRule"/>
</dbReference>
<dbReference type="GO" id="GO:0005506">
    <property type="term" value="F:iron ion binding"/>
    <property type="evidence" value="ECO:0007669"/>
    <property type="project" value="UniProtKB-UniRule"/>
</dbReference>
<dbReference type="GO" id="GO:0042167">
    <property type="term" value="P:heme catabolic process"/>
    <property type="evidence" value="ECO:0007669"/>
    <property type="project" value="UniProtKB-UniRule"/>
</dbReference>
<dbReference type="GO" id="GO:0033212">
    <property type="term" value="P:iron import into cell"/>
    <property type="evidence" value="ECO:0007669"/>
    <property type="project" value="InterPro"/>
</dbReference>
<dbReference type="Gene3D" id="3.30.70.100">
    <property type="match status" value="1"/>
</dbReference>
<dbReference type="HAMAP" id="MF_01272">
    <property type="entry name" value="Heme_degrading_monooxygenase"/>
    <property type="match status" value="1"/>
</dbReference>
<dbReference type="InterPro" id="IPR007138">
    <property type="entry name" value="ABM_dom"/>
</dbReference>
<dbReference type="InterPro" id="IPR011008">
    <property type="entry name" value="Dimeric_a/b-barrel"/>
</dbReference>
<dbReference type="InterPro" id="IPR050404">
    <property type="entry name" value="Heme-degrading_MO"/>
</dbReference>
<dbReference type="InterPro" id="IPR023953">
    <property type="entry name" value="IsdG"/>
</dbReference>
<dbReference type="NCBIfam" id="NF009838">
    <property type="entry name" value="PRK13313.1"/>
    <property type="match status" value="1"/>
</dbReference>
<dbReference type="PANTHER" id="PTHR34474:SF4">
    <property type="entry name" value="HEME OXYGENASE (STAPHYLOBILIN-PRODUCING) 1"/>
    <property type="match status" value="1"/>
</dbReference>
<dbReference type="PANTHER" id="PTHR34474">
    <property type="entry name" value="SIGNAL TRANSDUCTION PROTEIN TRAP"/>
    <property type="match status" value="1"/>
</dbReference>
<dbReference type="Pfam" id="PF03992">
    <property type="entry name" value="ABM"/>
    <property type="match status" value="1"/>
</dbReference>
<dbReference type="SUPFAM" id="SSF54909">
    <property type="entry name" value="Dimeric alpha+beta barrel"/>
    <property type="match status" value="1"/>
</dbReference>
<dbReference type="PROSITE" id="PS51725">
    <property type="entry name" value="ABM"/>
    <property type="match status" value="1"/>
</dbReference>
<gene>
    <name type="primary">isdI</name>
    <name type="ordered locus">MW0140</name>
</gene>
<feature type="chain" id="PRO_0000270090" description="Heme oxygenase (staphylobilin-producing) 2">
    <location>
        <begin position="1"/>
        <end position="108"/>
    </location>
</feature>
<feature type="domain" description="ABM" evidence="1">
    <location>
        <begin position="2"/>
        <end position="93"/>
    </location>
</feature>
<feature type="binding site" evidence="1">
    <location>
        <position position="6"/>
    </location>
    <ligand>
        <name>Fe cation</name>
        <dbReference type="ChEBI" id="CHEBI:24875"/>
    </ligand>
</feature>
<feature type="binding site" evidence="1">
    <location>
        <begin position="21"/>
        <end position="28"/>
    </location>
    <ligand>
        <name>heme</name>
        <dbReference type="ChEBI" id="CHEBI:30413"/>
    </ligand>
</feature>
<feature type="binding site" description="axial binding residue" evidence="1">
    <location>
        <position position="76"/>
    </location>
    <ligand>
        <name>heme</name>
        <dbReference type="ChEBI" id="CHEBI:30413"/>
    </ligand>
    <ligandPart>
        <name>Fe</name>
        <dbReference type="ChEBI" id="CHEBI:18248"/>
    </ligandPart>
</feature>
<feature type="site" description="Transition state stabilizer" evidence="1">
    <location>
        <position position="66"/>
    </location>
</feature>
<accession>Q7A1Y8</accession>
<comment type="function">
    <text evidence="1">Allows bacterial pathogens to use the host heme as an iron source. Catalyzes the oxidative degradation of the heme macrocyclic porphyrin ring to the oxo-bilirubin chromophore staphylobilin (a mixture of the linear tetrapyrroles 5-oxo-delta-bilirubin and 15-oxo-beta-bilirubin) in the presence of a suitable electron donor such as ascorbate or NADPH--cytochrome P450 reductase, with subsequent release of free iron.</text>
</comment>
<comment type="catalytic activity">
    <reaction evidence="1">
        <text>heme b + 5 AH2 + 4 O2 + 2 H(+) = delta-staphylobilin + Fe(2+) + formaldehyde + 5 A + 4 H2O</text>
        <dbReference type="Rhea" id="RHEA:37039"/>
        <dbReference type="ChEBI" id="CHEBI:13193"/>
        <dbReference type="ChEBI" id="CHEBI:15377"/>
        <dbReference type="ChEBI" id="CHEBI:15378"/>
        <dbReference type="ChEBI" id="CHEBI:15379"/>
        <dbReference type="ChEBI" id="CHEBI:16842"/>
        <dbReference type="ChEBI" id="CHEBI:17499"/>
        <dbReference type="ChEBI" id="CHEBI:29033"/>
        <dbReference type="ChEBI" id="CHEBI:60344"/>
        <dbReference type="ChEBI" id="CHEBI:74361"/>
        <dbReference type="EC" id="1.14.99.48"/>
    </reaction>
</comment>
<comment type="catalytic activity">
    <reaction evidence="1">
        <text>heme b + 5 AH2 + 4 O2 + 2 H(+) = beta-staphylobilin + Fe(2+) + formaldehyde + 5 A + 4 H2O</text>
        <dbReference type="Rhea" id="RHEA:37363"/>
        <dbReference type="ChEBI" id="CHEBI:13193"/>
        <dbReference type="ChEBI" id="CHEBI:15377"/>
        <dbReference type="ChEBI" id="CHEBI:15378"/>
        <dbReference type="ChEBI" id="CHEBI:15379"/>
        <dbReference type="ChEBI" id="CHEBI:16842"/>
        <dbReference type="ChEBI" id="CHEBI:17499"/>
        <dbReference type="ChEBI" id="CHEBI:29033"/>
        <dbReference type="ChEBI" id="CHEBI:60344"/>
        <dbReference type="ChEBI" id="CHEBI:74362"/>
        <dbReference type="EC" id="1.14.99.48"/>
    </reaction>
</comment>
<comment type="subunit">
    <text evidence="1">Homodimer.</text>
</comment>
<comment type="subcellular location">
    <subcellularLocation>
        <location evidence="1">Cytoplasm</location>
    </subcellularLocation>
</comment>
<comment type="similarity">
    <text evidence="1">Belongs to the antibiotic biosynthesis monooxygenase family. Heme-degrading monooxygenase IsdG subfamily.</text>
</comment>
<sequence>MFMAENRLQLQKGSAEETIERFYNRQGIETIEGFQQMFVTKTLNTEDTDEVKILTIWESEDSFNNWLNSDVFKEAHKNVRLKSDDDGQQSPILSNKVFKYDIGYHYQK</sequence>
<proteinExistence type="inferred from homology"/>
<protein>
    <recommendedName>
        <fullName evidence="1">Heme oxygenase (staphylobilin-producing) 2</fullName>
        <ecNumber evidence="1">1.14.99.48</ecNumber>
    </recommendedName>
    <alternativeName>
        <fullName evidence="1">Heme-degrading monooxygenase 2</fullName>
    </alternativeName>
    <alternativeName>
        <fullName evidence="1">Iron-regulated surface determinant 2</fullName>
    </alternativeName>
    <alternativeName>
        <fullName evidence="1">Iron-responsive surface determinant 2</fullName>
    </alternativeName>
</protein>
<name>HDOX2_STAAW</name>
<evidence type="ECO:0000255" key="1">
    <source>
        <dbReference type="HAMAP-Rule" id="MF_01272"/>
    </source>
</evidence>